<gene>
    <name evidence="1" type="primary">mraZ</name>
    <name type="ordered locus">PSPPH_4117</name>
</gene>
<sequence length="151" mass="17180">MFRGANAINLDAKGRLAMPSRYRDELDSRSAGQLIVTIDAVDPCLCLYPLSEWELIEAKLRDLATFREENRRLQRLLIGNAVDLELDGSGRFLVPPRLREYARLDKRVMLVGQLNKFQLWDEDAWNALADADLAAIQKPGAMPDELRDLIL</sequence>
<proteinExistence type="inferred from homology"/>
<reference key="1">
    <citation type="journal article" date="2005" name="J. Bacteriol.">
        <title>Whole-genome sequence analysis of Pseudomonas syringae pv. phaseolicola 1448A reveals divergence among pathovars in genes involved in virulence and transposition.</title>
        <authorList>
            <person name="Joardar V."/>
            <person name="Lindeberg M."/>
            <person name="Jackson R.W."/>
            <person name="Selengut J."/>
            <person name="Dodson R."/>
            <person name="Brinkac L.M."/>
            <person name="Daugherty S.C."/>
            <person name="DeBoy R.T."/>
            <person name="Durkin A.S."/>
            <person name="Gwinn Giglio M."/>
            <person name="Madupu R."/>
            <person name="Nelson W.C."/>
            <person name="Rosovitz M.J."/>
            <person name="Sullivan S.A."/>
            <person name="Crabtree J."/>
            <person name="Creasy T."/>
            <person name="Davidsen T.M."/>
            <person name="Haft D.H."/>
            <person name="Zafar N."/>
            <person name="Zhou L."/>
            <person name="Halpin R."/>
            <person name="Holley T."/>
            <person name="Khouri H.M."/>
            <person name="Feldblyum T.V."/>
            <person name="White O."/>
            <person name="Fraser C.M."/>
            <person name="Chatterjee A.K."/>
            <person name="Cartinhour S."/>
            <person name="Schneider D."/>
            <person name="Mansfield J.W."/>
            <person name="Collmer A."/>
            <person name="Buell R."/>
        </authorList>
    </citation>
    <scope>NUCLEOTIDE SEQUENCE [LARGE SCALE GENOMIC DNA]</scope>
    <source>
        <strain>1448A / Race 6</strain>
    </source>
</reference>
<protein>
    <recommendedName>
        <fullName>Transcriptional regulator MraZ</fullName>
    </recommendedName>
</protein>
<dbReference type="EMBL" id="CP000058">
    <property type="protein sequence ID" value="AAZ36930.1"/>
    <property type="molecule type" value="Genomic_DNA"/>
</dbReference>
<dbReference type="RefSeq" id="WP_002555055.1">
    <property type="nucleotide sequence ID" value="NC_005773.3"/>
</dbReference>
<dbReference type="SMR" id="Q48EE9"/>
<dbReference type="GeneID" id="96220590"/>
<dbReference type="KEGG" id="psp:PSPPH_4117"/>
<dbReference type="eggNOG" id="COG2001">
    <property type="taxonomic scope" value="Bacteria"/>
</dbReference>
<dbReference type="HOGENOM" id="CLU_107907_2_0_6"/>
<dbReference type="Proteomes" id="UP000000551">
    <property type="component" value="Chromosome"/>
</dbReference>
<dbReference type="GO" id="GO:0005737">
    <property type="term" value="C:cytoplasm"/>
    <property type="evidence" value="ECO:0007669"/>
    <property type="project" value="UniProtKB-UniRule"/>
</dbReference>
<dbReference type="GO" id="GO:0009295">
    <property type="term" value="C:nucleoid"/>
    <property type="evidence" value="ECO:0007669"/>
    <property type="project" value="UniProtKB-SubCell"/>
</dbReference>
<dbReference type="GO" id="GO:0003700">
    <property type="term" value="F:DNA-binding transcription factor activity"/>
    <property type="evidence" value="ECO:0007669"/>
    <property type="project" value="UniProtKB-UniRule"/>
</dbReference>
<dbReference type="GO" id="GO:0000976">
    <property type="term" value="F:transcription cis-regulatory region binding"/>
    <property type="evidence" value="ECO:0007669"/>
    <property type="project" value="TreeGrafter"/>
</dbReference>
<dbReference type="GO" id="GO:2000143">
    <property type="term" value="P:negative regulation of DNA-templated transcription initiation"/>
    <property type="evidence" value="ECO:0007669"/>
    <property type="project" value="TreeGrafter"/>
</dbReference>
<dbReference type="CDD" id="cd16321">
    <property type="entry name" value="MraZ_C"/>
    <property type="match status" value="1"/>
</dbReference>
<dbReference type="CDD" id="cd16320">
    <property type="entry name" value="MraZ_N"/>
    <property type="match status" value="1"/>
</dbReference>
<dbReference type="FunFam" id="3.40.1550.20:FF:000001">
    <property type="entry name" value="Transcriptional regulator MraZ"/>
    <property type="match status" value="1"/>
</dbReference>
<dbReference type="Gene3D" id="3.40.1550.20">
    <property type="entry name" value="Transcriptional regulator MraZ domain"/>
    <property type="match status" value="1"/>
</dbReference>
<dbReference type="HAMAP" id="MF_01008">
    <property type="entry name" value="MraZ"/>
    <property type="match status" value="1"/>
</dbReference>
<dbReference type="InterPro" id="IPR003444">
    <property type="entry name" value="MraZ"/>
</dbReference>
<dbReference type="InterPro" id="IPR035644">
    <property type="entry name" value="MraZ_C"/>
</dbReference>
<dbReference type="InterPro" id="IPR020603">
    <property type="entry name" value="MraZ_dom"/>
</dbReference>
<dbReference type="InterPro" id="IPR035642">
    <property type="entry name" value="MraZ_N"/>
</dbReference>
<dbReference type="InterPro" id="IPR038619">
    <property type="entry name" value="MraZ_sf"/>
</dbReference>
<dbReference type="InterPro" id="IPR007159">
    <property type="entry name" value="SpoVT-AbrB_dom"/>
</dbReference>
<dbReference type="InterPro" id="IPR037914">
    <property type="entry name" value="SpoVT-AbrB_sf"/>
</dbReference>
<dbReference type="NCBIfam" id="TIGR00242">
    <property type="entry name" value="division/cell wall cluster transcriptional repressor MraZ"/>
    <property type="match status" value="1"/>
</dbReference>
<dbReference type="PANTHER" id="PTHR34701">
    <property type="entry name" value="TRANSCRIPTIONAL REGULATOR MRAZ"/>
    <property type="match status" value="1"/>
</dbReference>
<dbReference type="PANTHER" id="PTHR34701:SF1">
    <property type="entry name" value="TRANSCRIPTIONAL REGULATOR MRAZ"/>
    <property type="match status" value="1"/>
</dbReference>
<dbReference type="Pfam" id="PF02381">
    <property type="entry name" value="MraZ"/>
    <property type="match status" value="2"/>
</dbReference>
<dbReference type="SUPFAM" id="SSF89447">
    <property type="entry name" value="AbrB/MazE/MraZ-like"/>
    <property type="match status" value="1"/>
</dbReference>
<dbReference type="PROSITE" id="PS51740">
    <property type="entry name" value="SPOVT_ABRB"/>
    <property type="match status" value="2"/>
</dbReference>
<accession>Q48EE9</accession>
<name>MRAZ_PSE14</name>
<feature type="chain" id="PRO_0000230102" description="Transcriptional regulator MraZ">
    <location>
        <begin position="1"/>
        <end position="151"/>
    </location>
</feature>
<feature type="domain" description="SpoVT-AbrB 1" evidence="2">
    <location>
        <begin position="5"/>
        <end position="52"/>
    </location>
</feature>
<feature type="domain" description="SpoVT-AbrB 2" evidence="2">
    <location>
        <begin position="81"/>
        <end position="124"/>
    </location>
</feature>
<keyword id="KW-0963">Cytoplasm</keyword>
<keyword id="KW-0238">DNA-binding</keyword>
<keyword id="KW-0677">Repeat</keyword>
<keyword id="KW-0804">Transcription</keyword>
<keyword id="KW-0805">Transcription regulation</keyword>
<evidence type="ECO:0000255" key="1">
    <source>
        <dbReference type="HAMAP-Rule" id="MF_01008"/>
    </source>
</evidence>
<evidence type="ECO:0000255" key="2">
    <source>
        <dbReference type="PROSITE-ProRule" id="PRU01076"/>
    </source>
</evidence>
<comment type="subunit">
    <text evidence="1">Forms oligomers.</text>
</comment>
<comment type="subcellular location">
    <subcellularLocation>
        <location evidence="1">Cytoplasm</location>
        <location evidence="1">Nucleoid</location>
    </subcellularLocation>
</comment>
<comment type="similarity">
    <text evidence="1">Belongs to the MraZ family.</text>
</comment>
<organism>
    <name type="scientific">Pseudomonas savastanoi pv. phaseolicola (strain 1448A / Race 6)</name>
    <name type="common">Pseudomonas syringae pv. phaseolicola (strain 1448A / Race 6)</name>
    <dbReference type="NCBI Taxonomy" id="264730"/>
    <lineage>
        <taxon>Bacteria</taxon>
        <taxon>Pseudomonadati</taxon>
        <taxon>Pseudomonadota</taxon>
        <taxon>Gammaproteobacteria</taxon>
        <taxon>Pseudomonadales</taxon>
        <taxon>Pseudomonadaceae</taxon>
        <taxon>Pseudomonas</taxon>
    </lineage>
</organism>